<sequence length="80" mass="9281">MAFLKKSLFLVLFLGIVSLSICEEEKREGEEEEKQEEENEELSEEELRDRRAWLDKLKSLGKVVGKVGLGVVQNYLNPRQ</sequence>
<comment type="function">
    <text evidence="1">Has antibacterial activity.</text>
</comment>
<comment type="subcellular location">
    <subcellularLocation>
        <location evidence="5">Secreted</location>
    </subcellularLocation>
</comment>
<comment type="tissue specificity">
    <text evidence="5">Expressed by the skin glands.</text>
</comment>
<comment type="similarity">
    <text evidence="2">Belongs to the frog skin active peptide (FSAP) family. Dermaseptin subfamily.</text>
</comment>
<reference evidence="5" key="1">
    <citation type="journal article" date="2008" name="Biochem. Biophys. Res. Commun.">
        <title>Post-secretory events alter the peptide content of the skin secretion of Hypsiboas raniceps.</title>
        <authorList>
            <person name="Magalhaes B.S."/>
            <person name="Melo J.A.T."/>
            <person name="Leite J.R.S.A."/>
            <person name="Silva L.P."/>
            <person name="Prates M.V."/>
            <person name="Vinecky F."/>
            <person name="Barbosa E.A."/>
            <person name="Verly R.M."/>
            <person name="Mehta A."/>
            <person name="Nicoli J.R."/>
            <person name="Bemquerer M.P."/>
            <person name="Andrade A.C."/>
            <person name="Bloch C. Jr."/>
        </authorList>
    </citation>
    <scope>NUCLEOTIDE SEQUENCE [MRNA]</scope>
    <source>
        <tissue evidence="3">Skin</tissue>
    </source>
</reference>
<protein>
    <recommendedName>
        <fullName evidence="4">Raniseptin-4</fullName>
        <shortName evidence="4">Rsp-4</shortName>
    </recommendedName>
</protein>
<dbReference type="GO" id="GO:0005576">
    <property type="term" value="C:extracellular region"/>
    <property type="evidence" value="ECO:0007669"/>
    <property type="project" value="UniProtKB-SubCell"/>
</dbReference>
<dbReference type="GO" id="GO:0042742">
    <property type="term" value="P:defense response to bacterium"/>
    <property type="evidence" value="ECO:0007669"/>
    <property type="project" value="UniProtKB-KW"/>
</dbReference>
<dbReference type="InterPro" id="IPR004275">
    <property type="entry name" value="Frog_antimicrobial_propeptide"/>
</dbReference>
<dbReference type="InterPro" id="IPR016322">
    <property type="entry name" value="FSAP"/>
</dbReference>
<dbReference type="Pfam" id="PF03032">
    <property type="entry name" value="FSAP_sig_propep"/>
    <property type="match status" value="1"/>
</dbReference>
<dbReference type="PIRSF" id="PIRSF001822">
    <property type="entry name" value="Dermaseptin_precursor"/>
    <property type="match status" value="1"/>
</dbReference>
<accession>P86186</accession>
<proteinExistence type="inferred from homology"/>
<name>RNSP4_BOARA</name>
<feature type="signal peptide" evidence="2">
    <location>
        <begin position="1"/>
        <end position="22"/>
    </location>
</feature>
<feature type="propeptide" id="PRO_0000371443" evidence="1">
    <location>
        <begin position="23"/>
        <end position="49"/>
    </location>
</feature>
<feature type="peptide" id="PRO_0000371444" description="Raniseptin-4" evidence="1">
    <location>
        <begin position="52"/>
        <end position="80"/>
    </location>
</feature>
<organism>
    <name type="scientific">Boana raniceps</name>
    <name type="common">Chaco tree frog</name>
    <name type="synonym">Hyla roeschmanni</name>
    <dbReference type="NCBI Taxonomy" id="192750"/>
    <lineage>
        <taxon>Eukaryota</taxon>
        <taxon>Metazoa</taxon>
        <taxon>Chordata</taxon>
        <taxon>Craniata</taxon>
        <taxon>Vertebrata</taxon>
        <taxon>Euteleostomi</taxon>
        <taxon>Amphibia</taxon>
        <taxon>Batrachia</taxon>
        <taxon>Anura</taxon>
        <taxon>Neobatrachia</taxon>
        <taxon>Hyloidea</taxon>
        <taxon>Hylidae</taxon>
        <taxon>Hylinae</taxon>
        <taxon>Cophomantini</taxon>
        <taxon>Boana</taxon>
    </lineage>
</organism>
<evidence type="ECO:0000250" key="1">
    <source>
        <dbReference type="UniProtKB" id="P86037"/>
    </source>
</evidence>
<evidence type="ECO:0000255" key="2"/>
<evidence type="ECO:0000269" key="3">
    <source>
    </source>
</evidence>
<evidence type="ECO:0000303" key="4">
    <source>
    </source>
</evidence>
<evidence type="ECO:0000305" key="5"/>
<keyword id="KW-0878">Amphibian defense peptide</keyword>
<keyword id="KW-0044">Antibiotic</keyword>
<keyword id="KW-0929">Antimicrobial</keyword>
<keyword id="KW-0165">Cleavage on pair of basic residues</keyword>
<keyword id="KW-0964">Secreted</keyword>
<keyword id="KW-0732">Signal</keyword>